<keyword id="KW-0025">Alternative splicing</keyword>
<keyword id="KW-0175">Coiled coil</keyword>
<keyword id="KW-0963">Cytoplasm</keyword>
<keyword id="KW-0206">Cytoskeleton</keyword>
<keyword id="KW-1185">Reference proteome</keyword>
<protein>
    <recommendedName>
        <fullName>Coiled-coil domain-containing protein 68</fullName>
    </recommendedName>
</protein>
<name>CCD68_MOUSE</name>
<comment type="function">
    <text evidence="3">Centriolar protein required for centriole subdistal appendage assembly and microtubule anchoring in interphase cells (PubMed:28422092). Together with CCDC120, cooperate with subdistal appendage components ODF2, NIN and CEP170 for hierarchical subdistal appendage assembly (PubMed:28422092).</text>
</comment>
<comment type="subunit">
    <text evidence="1">Interacts with CEP170.</text>
</comment>
<comment type="subcellular location">
    <subcellularLocation>
        <location evidence="1">Cytoplasm</location>
        <location evidence="1">Cytoskeleton</location>
        <location evidence="1">Microtubule organizing center</location>
        <location evidence="1">Centrosome</location>
        <location evidence="1">Centriole</location>
    </subcellularLocation>
    <text evidence="1">Localizes to the subdistal appendages of centrioles.</text>
</comment>
<comment type="alternative products">
    <event type="alternative splicing"/>
    <isoform>
        <id>Q8BVC4-1</id>
        <name>1</name>
        <sequence type="displayed"/>
    </isoform>
    <isoform>
        <id>Q8BVC4-2</id>
        <name>2</name>
        <sequence type="described" ref="VSP_021897"/>
    </isoform>
</comment>
<feature type="chain" id="PRO_0000264612" description="Coiled-coil domain-containing protein 68">
    <location>
        <begin position="1"/>
        <end position="333"/>
    </location>
</feature>
<feature type="coiled-coil region" evidence="2">
    <location>
        <begin position="86"/>
        <end position="120"/>
    </location>
</feature>
<feature type="coiled-coil region" evidence="2">
    <location>
        <begin position="160"/>
        <end position="302"/>
    </location>
</feature>
<feature type="splice variant" id="VSP_021897" description="In isoform 2." evidence="4">
    <location>
        <begin position="199"/>
        <end position="289"/>
    </location>
</feature>
<sequence length="333" mass="37992">MTTVTVTTEVPSSGKTEDGHVFCDSSSAHIIEETEYVRQMRTTLEKIRNHMFKEKEGCGNARHKLDAEGSGNIQNGSDSTTDPTCLDLLMENMRRKDQQLLEMNRENEVLQIKLEASREAGAAALRNVAQRLFDNYQTQAGDLEKKHEGRKHLLQVNNLEKEQALKGSAESLNLLSEKLEEKHGQIVGLENRVQRMENEKKTLLEKKLRLESKLFQLKSNAANPKSCQDLQTEISILQEQISHLQFVIHSQHQNLRSIIQEMEGLKNTLKEQDTKIENLKEKVTVLEAQNKELKTRVAHWTETPRTLVSKAVSTSELKTEGASPYLMLIRLRK</sequence>
<reference key="1">
    <citation type="journal article" date="2005" name="Science">
        <title>The transcriptional landscape of the mammalian genome.</title>
        <authorList>
            <person name="Carninci P."/>
            <person name="Kasukawa T."/>
            <person name="Katayama S."/>
            <person name="Gough J."/>
            <person name="Frith M.C."/>
            <person name="Maeda N."/>
            <person name="Oyama R."/>
            <person name="Ravasi T."/>
            <person name="Lenhard B."/>
            <person name="Wells C."/>
            <person name="Kodzius R."/>
            <person name="Shimokawa K."/>
            <person name="Bajic V.B."/>
            <person name="Brenner S.E."/>
            <person name="Batalov S."/>
            <person name="Forrest A.R."/>
            <person name="Zavolan M."/>
            <person name="Davis M.J."/>
            <person name="Wilming L.G."/>
            <person name="Aidinis V."/>
            <person name="Allen J.E."/>
            <person name="Ambesi-Impiombato A."/>
            <person name="Apweiler R."/>
            <person name="Aturaliya R.N."/>
            <person name="Bailey T.L."/>
            <person name="Bansal M."/>
            <person name="Baxter L."/>
            <person name="Beisel K.W."/>
            <person name="Bersano T."/>
            <person name="Bono H."/>
            <person name="Chalk A.M."/>
            <person name="Chiu K.P."/>
            <person name="Choudhary V."/>
            <person name="Christoffels A."/>
            <person name="Clutterbuck D.R."/>
            <person name="Crowe M.L."/>
            <person name="Dalla E."/>
            <person name="Dalrymple B.P."/>
            <person name="de Bono B."/>
            <person name="Della Gatta G."/>
            <person name="di Bernardo D."/>
            <person name="Down T."/>
            <person name="Engstrom P."/>
            <person name="Fagiolini M."/>
            <person name="Faulkner G."/>
            <person name="Fletcher C.F."/>
            <person name="Fukushima T."/>
            <person name="Furuno M."/>
            <person name="Futaki S."/>
            <person name="Gariboldi M."/>
            <person name="Georgii-Hemming P."/>
            <person name="Gingeras T.R."/>
            <person name="Gojobori T."/>
            <person name="Green R.E."/>
            <person name="Gustincich S."/>
            <person name="Harbers M."/>
            <person name="Hayashi Y."/>
            <person name="Hensch T.K."/>
            <person name="Hirokawa N."/>
            <person name="Hill D."/>
            <person name="Huminiecki L."/>
            <person name="Iacono M."/>
            <person name="Ikeo K."/>
            <person name="Iwama A."/>
            <person name="Ishikawa T."/>
            <person name="Jakt M."/>
            <person name="Kanapin A."/>
            <person name="Katoh M."/>
            <person name="Kawasawa Y."/>
            <person name="Kelso J."/>
            <person name="Kitamura H."/>
            <person name="Kitano H."/>
            <person name="Kollias G."/>
            <person name="Krishnan S.P."/>
            <person name="Kruger A."/>
            <person name="Kummerfeld S.K."/>
            <person name="Kurochkin I.V."/>
            <person name="Lareau L.F."/>
            <person name="Lazarevic D."/>
            <person name="Lipovich L."/>
            <person name="Liu J."/>
            <person name="Liuni S."/>
            <person name="McWilliam S."/>
            <person name="Madan Babu M."/>
            <person name="Madera M."/>
            <person name="Marchionni L."/>
            <person name="Matsuda H."/>
            <person name="Matsuzawa S."/>
            <person name="Miki H."/>
            <person name="Mignone F."/>
            <person name="Miyake S."/>
            <person name="Morris K."/>
            <person name="Mottagui-Tabar S."/>
            <person name="Mulder N."/>
            <person name="Nakano N."/>
            <person name="Nakauchi H."/>
            <person name="Ng P."/>
            <person name="Nilsson R."/>
            <person name="Nishiguchi S."/>
            <person name="Nishikawa S."/>
            <person name="Nori F."/>
            <person name="Ohara O."/>
            <person name="Okazaki Y."/>
            <person name="Orlando V."/>
            <person name="Pang K.C."/>
            <person name="Pavan W.J."/>
            <person name="Pavesi G."/>
            <person name="Pesole G."/>
            <person name="Petrovsky N."/>
            <person name="Piazza S."/>
            <person name="Reed J."/>
            <person name="Reid J.F."/>
            <person name="Ring B.Z."/>
            <person name="Ringwald M."/>
            <person name="Rost B."/>
            <person name="Ruan Y."/>
            <person name="Salzberg S.L."/>
            <person name="Sandelin A."/>
            <person name="Schneider C."/>
            <person name="Schoenbach C."/>
            <person name="Sekiguchi K."/>
            <person name="Semple C.A."/>
            <person name="Seno S."/>
            <person name="Sessa L."/>
            <person name="Sheng Y."/>
            <person name="Shibata Y."/>
            <person name="Shimada H."/>
            <person name="Shimada K."/>
            <person name="Silva D."/>
            <person name="Sinclair B."/>
            <person name="Sperling S."/>
            <person name="Stupka E."/>
            <person name="Sugiura K."/>
            <person name="Sultana R."/>
            <person name="Takenaka Y."/>
            <person name="Taki K."/>
            <person name="Tammoja K."/>
            <person name="Tan S.L."/>
            <person name="Tang S."/>
            <person name="Taylor M.S."/>
            <person name="Tegner J."/>
            <person name="Teichmann S.A."/>
            <person name="Ueda H.R."/>
            <person name="van Nimwegen E."/>
            <person name="Verardo R."/>
            <person name="Wei C.L."/>
            <person name="Yagi K."/>
            <person name="Yamanishi H."/>
            <person name="Zabarovsky E."/>
            <person name="Zhu S."/>
            <person name="Zimmer A."/>
            <person name="Hide W."/>
            <person name="Bult C."/>
            <person name="Grimmond S.M."/>
            <person name="Teasdale R.D."/>
            <person name="Liu E.T."/>
            <person name="Brusic V."/>
            <person name="Quackenbush J."/>
            <person name="Wahlestedt C."/>
            <person name="Mattick J.S."/>
            <person name="Hume D.A."/>
            <person name="Kai C."/>
            <person name="Sasaki D."/>
            <person name="Tomaru Y."/>
            <person name="Fukuda S."/>
            <person name="Kanamori-Katayama M."/>
            <person name="Suzuki M."/>
            <person name="Aoki J."/>
            <person name="Arakawa T."/>
            <person name="Iida J."/>
            <person name="Imamura K."/>
            <person name="Itoh M."/>
            <person name="Kato T."/>
            <person name="Kawaji H."/>
            <person name="Kawagashira N."/>
            <person name="Kawashima T."/>
            <person name="Kojima M."/>
            <person name="Kondo S."/>
            <person name="Konno H."/>
            <person name="Nakano K."/>
            <person name="Ninomiya N."/>
            <person name="Nishio T."/>
            <person name="Okada M."/>
            <person name="Plessy C."/>
            <person name="Shibata K."/>
            <person name="Shiraki T."/>
            <person name="Suzuki S."/>
            <person name="Tagami M."/>
            <person name="Waki K."/>
            <person name="Watahiki A."/>
            <person name="Okamura-Oho Y."/>
            <person name="Suzuki H."/>
            <person name="Kawai J."/>
            <person name="Hayashizaki Y."/>
        </authorList>
    </citation>
    <scope>NUCLEOTIDE SEQUENCE [LARGE SCALE MRNA] (ISOFORM 1)</scope>
    <source>
        <strain>C57BL/6J</strain>
        <tissue>Cecum</tissue>
    </source>
</reference>
<reference key="2">
    <citation type="journal article" date="2004" name="Genome Res.">
        <title>The status, quality, and expansion of the NIH full-length cDNA project: the Mammalian Gene Collection (MGC).</title>
        <authorList>
            <consortium name="The MGC Project Team"/>
        </authorList>
    </citation>
    <scope>NUCLEOTIDE SEQUENCE [LARGE SCALE MRNA] (ISOFORM 2)</scope>
    <source>
        <strain>FVB/N-3</strain>
        <tissue>Mammary gland</tissue>
    </source>
</reference>
<reference key="3">
    <citation type="journal article" date="2017" name="Nat. Commun.">
        <title>Hierarchical assembly of centriole subdistal appendages via centrosome binding proteins CCDC120 and CCDC68.</title>
        <authorList>
            <person name="Huang N."/>
            <person name="Xia Y."/>
            <person name="Zhang D."/>
            <person name="Wang S."/>
            <person name="Bao Y."/>
            <person name="He R."/>
            <person name="Teng J."/>
            <person name="Chen J."/>
        </authorList>
    </citation>
    <scope>FUNCTION</scope>
</reference>
<dbReference type="EMBL" id="AK078964">
    <property type="protein sequence ID" value="BAC37481.1"/>
    <property type="molecule type" value="mRNA"/>
</dbReference>
<dbReference type="EMBL" id="BC046343">
    <property type="protein sequence ID" value="AAH46343.1"/>
    <property type="molecule type" value="mRNA"/>
</dbReference>
<dbReference type="CCDS" id="CCDS29330.1">
    <molecule id="Q8BVC4-1"/>
</dbReference>
<dbReference type="RefSeq" id="NP_958750.1">
    <molecule id="Q8BVC4-1"/>
    <property type="nucleotide sequence ID" value="NM_201362.2"/>
</dbReference>
<dbReference type="SMR" id="Q8BVC4"/>
<dbReference type="FunCoup" id="Q8BVC4">
    <property type="interactions" value="23"/>
</dbReference>
<dbReference type="STRING" id="10090.ENSMUSP00000046197"/>
<dbReference type="iPTMnet" id="Q8BVC4"/>
<dbReference type="PhosphoSitePlus" id="Q8BVC4"/>
<dbReference type="PaxDb" id="10090-ENSMUSP00000046197"/>
<dbReference type="ProteomicsDB" id="265592">
    <molecule id="Q8BVC4-1"/>
</dbReference>
<dbReference type="ProteomicsDB" id="265593">
    <molecule id="Q8BVC4-2"/>
</dbReference>
<dbReference type="Antibodypedia" id="53345">
    <property type="antibodies" value="89 antibodies from 21 providers"/>
</dbReference>
<dbReference type="DNASU" id="381175"/>
<dbReference type="Ensembl" id="ENSMUST00000043929.11">
    <molecule id="Q8BVC4-1"/>
    <property type="protein sequence ID" value="ENSMUSP00000046197.5"/>
    <property type="gene ID" value="ENSMUSG00000038903.14"/>
</dbReference>
<dbReference type="Ensembl" id="ENSMUST00000080050.6">
    <molecule id="Q8BVC4-2"/>
    <property type="protein sequence ID" value="ENSMUSP00000078959.6"/>
    <property type="gene ID" value="ENSMUSG00000038903.14"/>
</dbReference>
<dbReference type="GeneID" id="381175"/>
<dbReference type="KEGG" id="mmu:381175"/>
<dbReference type="UCSC" id="uc008fnw.1">
    <molecule id="Q8BVC4-1"/>
    <property type="organism name" value="mouse"/>
</dbReference>
<dbReference type="UCSC" id="uc008fnx.1">
    <molecule id="Q8BVC4-2"/>
    <property type="organism name" value="mouse"/>
</dbReference>
<dbReference type="AGR" id="MGI:3612676"/>
<dbReference type="CTD" id="80323"/>
<dbReference type="MGI" id="MGI:3612676">
    <property type="gene designation" value="Ccdc68"/>
</dbReference>
<dbReference type="VEuPathDB" id="HostDB:ENSMUSG00000038903"/>
<dbReference type="eggNOG" id="ENOG502RXID">
    <property type="taxonomic scope" value="Eukaryota"/>
</dbReference>
<dbReference type="GeneTree" id="ENSGT00950000183065"/>
<dbReference type="HOGENOM" id="CLU_071853_0_0_1"/>
<dbReference type="InParanoid" id="Q8BVC4"/>
<dbReference type="OMA" id="ETEYIKQ"/>
<dbReference type="OrthoDB" id="9391002at2759"/>
<dbReference type="PhylomeDB" id="Q8BVC4"/>
<dbReference type="TreeFam" id="TF331627"/>
<dbReference type="BioGRID-ORCS" id="381175">
    <property type="hits" value="1 hit in 77 CRISPR screens"/>
</dbReference>
<dbReference type="ChiTaRS" id="Ccdc68">
    <property type="organism name" value="mouse"/>
</dbReference>
<dbReference type="PRO" id="PR:Q8BVC4"/>
<dbReference type="Proteomes" id="UP000000589">
    <property type="component" value="Chromosome 18"/>
</dbReference>
<dbReference type="RNAct" id="Q8BVC4">
    <property type="molecule type" value="protein"/>
</dbReference>
<dbReference type="Bgee" id="ENSMUSG00000038903">
    <property type="expression patterns" value="Expressed in otolith organ and 123 other cell types or tissues"/>
</dbReference>
<dbReference type="GO" id="GO:0120103">
    <property type="term" value="C:centriolar subdistal appendage"/>
    <property type="evidence" value="ECO:0007669"/>
    <property type="project" value="Ensembl"/>
</dbReference>
<dbReference type="GO" id="GO:0005814">
    <property type="term" value="C:centriole"/>
    <property type="evidence" value="ECO:0007669"/>
    <property type="project" value="UniProtKB-SubCell"/>
</dbReference>
<dbReference type="GO" id="GO:0005737">
    <property type="term" value="C:cytoplasm"/>
    <property type="evidence" value="ECO:0007669"/>
    <property type="project" value="UniProtKB-KW"/>
</dbReference>
<dbReference type="GO" id="GO:0034454">
    <property type="term" value="P:microtubule anchoring at centrosome"/>
    <property type="evidence" value="ECO:0007669"/>
    <property type="project" value="Ensembl"/>
</dbReference>
<dbReference type="GO" id="GO:0008104">
    <property type="term" value="P:protein localization"/>
    <property type="evidence" value="ECO:0007669"/>
    <property type="project" value="Ensembl"/>
</dbReference>
<dbReference type="Gene3D" id="1.10.287.1490">
    <property type="match status" value="1"/>
</dbReference>
<dbReference type="InterPro" id="IPR051375">
    <property type="entry name" value="Tuftelin_GRINL1A/MYZAP/CCD68"/>
</dbReference>
<dbReference type="PANTHER" id="PTHR23171:SF3">
    <property type="entry name" value="COILED-COIL DOMAIN-CONTAINING PROTEIN 68"/>
    <property type="match status" value="1"/>
</dbReference>
<dbReference type="PANTHER" id="PTHR23171">
    <property type="entry name" value="GDOWN1"/>
    <property type="match status" value="1"/>
</dbReference>
<evidence type="ECO:0000250" key="1">
    <source>
        <dbReference type="UniProtKB" id="Q9H2F9"/>
    </source>
</evidence>
<evidence type="ECO:0000255" key="2"/>
<evidence type="ECO:0000269" key="3">
    <source>
    </source>
</evidence>
<evidence type="ECO:0000303" key="4">
    <source>
    </source>
</evidence>
<proteinExistence type="evidence at transcript level"/>
<gene>
    <name type="primary">Ccdc68</name>
</gene>
<accession>Q8BVC4</accession>
<accession>Q80VD6</accession>
<organism>
    <name type="scientific">Mus musculus</name>
    <name type="common">Mouse</name>
    <dbReference type="NCBI Taxonomy" id="10090"/>
    <lineage>
        <taxon>Eukaryota</taxon>
        <taxon>Metazoa</taxon>
        <taxon>Chordata</taxon>
        <taxon>Craniata</taxon>
        <taxon>Vertebrata</taxon>
        <taxon>Euteleostomi</taxon>
        <taxon>Mammalia</taxon>
        <taxon>Eutheria</taxon>
        <taxon>Euarchontoglires</taxon>
        <taxon>Glires</taxon>
        <taxon>Rodentia</taxon>
        <taxon>Myomorpha</taxon>
        <taxon>Muroidea</taxon>
        <taxon>Muridae</taxon>
        <taxon>Murinae</taxon>
        <taxon>Mus</taxon>
        <taxon>Mus</taxon>
    </lineage>
</organism>